<dbReference type="EMBL" id="CP000712">
    <property type="protein sequence ID" value="ABQ76922.1"/>
    <property type="molecule type" value="Genomic_DNA"/>
</dbReference>
<dbReference type="SMR" id="A5VYG2"/>
<dbReference type="KEGG" id="ppf:Pput_0758"/>
<dbReference type="eggNOG" id="COG3017">
    <property type="taxonomic scope" value="Bacteria"/>
</dbReference>
<dbReference type="HOGENOM" id="CLU_092816_2_1_6"/>
<dbReference type="GO" id="GO:0009279">
    <property type="term" value="C:cell outer membrane"/>
    <property type="evidence" value="ECO:0007669"/>
    <property type="project" value="UniProtKB-SubCell"/>
</dbReference>
<dbReference type="GO" id="GO:0044874">
    <property type="term" value="P:lipoprotein localization to outer membrane"/>
    <property type="evidence" value="ECO:0007669"/>
    <property type="project" value="UniProtKB-UniRule"/>
</dbReference>
<dbReference type="GO" id="GO:0015031">
    <property type="term" value="P:protein transport"/>
    <property type="evidence" value="ECO:0007669"/>
    <property type="project" value="UniProtKB-KW"/>
</dbReference>
<dbReference type="CDD" id="cd16326">
    <property type="entry name" value="LolB"/>
    <property type="match status" value="1"/>
</dbReference>
<dbReference type="Gene3D" id="2.50.20.10">
    <property type="entry name" value="Lipoprotein localisation LolA/LolB/LppX"/>
    <property type="match status" value="1"/>
</dbReference>
<dbReference type="HAMAP" id="MF_00233">
    <property type="entry name" value="LolB"/>
    <property type="match status" value="1"/>
</dbReference>
<dbReference type="InterPro" id="IPR029046">
    <property type="entry name" value="LolA/LolB/LppX"/>
</dbReference>
<dbReference type="InterPro" id="IPR004565">
    <property type="entry name" value="OM_lipoprot_LolB"/>
</dbReference>
<dbReference type="NCBIfam" id="TIGR00548">
    <property type="entry name" value="lolB"/>
    <property type="match status" value="1"/>
</dbReference>
<dbReference type="Pfam" id="PF03550">
    <property type="entry name" value="LolB"/>
    <property type="match status" value="1"/>
</dbReference>
<dbReference type="SUPFAM" id="SSF89392">
    <property type="entry name" value="Prokaryotic lipoproteins and lipoprotein localization factors"/>
    <property type="match status" value="1"/>
</dbReference>
<dbReference type="PROSITE" id="PS51257">
    <property type="entry name" value="PROKAR_LIPOPROTEIN"/>
    <property type="match status" value="1"/>
</dbReference>
<feature type="signal peptide" evidence="1">
    <location>
        <begin position="1"/>
        <end position="17"/>
    </location>
</feature>
<feature type="chain" id="PRO_1000021670" description="Outer-membrane lipoprotein LolB">
    <location>
        <begin position="18"/>
        <end position="205"/>
    </location>
</feature>
<feature type="lipid moiety-binding region" description="N-palmitoyl cysteine" evidence="1">
    <location>
        <position position="18"/>
    </location>
</feature>
<feature type="lipid moiety-binding region" description="S-diacylglycerol cysteine" evidence="1">
    <location>
        <position position="18"/>
    </location>
</feature>
<proteinExistence type="inferred from homology"/>
<name>LOLB_PSEP1</name>
<accession>A5VYG2</accession>
<organism>
    <name type="scientific">Pseudomonas putida (strain ATCC 700007 / DSM 6899 / JCM 31910 / BCRC 17059 / LMG 24140 / F1)</name>
    <dbReference type="NCBI Taxonomy" id="351746"/>
    <lineage>
        <taxon>Bacteria</taxon>
        <taxon>Pseudomonadati</taxon>
        <taxon>Pseudomonadota</taxon>
        <taxon>Gammaproteobacteria</taxon>
        <taxon>Pseudomonadales</taxon>
        <taxon>Pseudomonadaceae</taxon>
        <taxon>Pseudomonas</taxon>
    </lineage>
</organism>
<reference key="1">
    <citation type="submission" date="2007-05" db="EMBL/GenBank/DDBJ databases">
        <title>Complete sequence of Pseudomonas putida F1.</title>
        <authorList>
            <consortium name="US DOE Joint Genome Institute"/>
            <person name="Copeland A."/>
            <person name="Lucas S."/>
            <person name="Lapidus A."/>
            <person name="Barry K."/>
            <person name="Detter J.C."/>
            <person name="Glavina del Rio T."/>
            <person name="Hammon N."/>
            <person name="Israni S."/>
            <person name="Dalin E."/>
            <person name="Tice H."/>
            <person name="Pitluck S."/>
            <person name="Chain P."/>
            <person name="Malfatti S."/>
            <person name="Shin M."/>
            <person name="Vergez L."/>
            <person name="Schmutz J."/>
            <person name="Larimer F."/>
            <person name="Land M."/>
            <person name="Hauser L."/>
            <person name="Kyrpides N."/>
            <person name="Lykidis A."/>
            <person name="Parales R."/>
            <person name="Richardson P."/>
        </authorList>
    </citation>
    <scope>NUCLEOTIDE SEQUENCE [LARGE SCALE GENOMIC DNA]</scope>
    <source>
        <strain>ATCC 700007 / DSM 6899 / JCM 31910 / BCRC 17059 / LMG 24140 / F1</strain>
    </source>
</reference>
<evidence type="ECO:0000255" key="1">
    <source>
        <dbReference type="HAMAP-Rule" id="MF_00233"/>
    </source>
</evidence>
<protein>
    <recommendedName>
        <fullName evidence="1">Outer-membrane lipoprotein LolB</fullName>
    </recommendedName>
</protein>
<comment type="function">
    <text evidence="1">Plays a critical role in the incorporation of lipoproteins in the outer membrane after they are released by the LolA protein.</text>
</comment>
<comment type="subunit">
    <text evidence="1">Monomer.</text>
</comment>
<comment type="subcellular location">
    <subcellularLocation>
        <location evidence="1">Cell outer membrane</location>
        <topology evidence="1">Lipid-anchor</topology>
    </subcellularLocation>
</comment>
<comment type="similarity">
    <text evidence="1">Belongs to the LolB family.</text>
</comment>
<sequence>MFLRHCITFTMIALLAGCAGFGSREALQGHGDPQQWRAHKAQLSSLDGWQINGKVGIRAPRDSGSGTLFWLQRQDYYDIRLAGPLGRGAARLTGRPGGVVLEVANQGRYEATSPEALLEEQLGWQLPVSHLVWWVRGLPAPDSKSKLTLDGDSRLASLDQDGWQVQYLSYTEQNGYWLPERLKLHGKDLDVTLVVKDWQPRQLGH</sequence>
<keyword id="KW-0998">Cell outer membrane</keyword>
<keyword id="KW-0143">Chaperone</keyword>
<keyword id="KW-0449">Lipoprotein</keyword>
<keyword id="KW-0472">Membrane</keyword>
<keyword id="KW-0564">Palmitate</keyword>
<keyword id="KW-0653">Protein transport</keyword>
<keyword id="KW-0732">Signal</keyword>
<keyword id="KW-0813">Transport</keyword>
<gene>
    <name evidence="1" type="primary">lolB</name>
    <name type="ordered locus">Pput_0758</name>
</gene>